<accession>Q0AYI7</accession>
<reference key="1">
    <citation type="journal article" date="2010" name="Environ. Microbiol.">
        <title>The genome of Syntrophomonas wolfei: new insights into syntrophic metabolism and biohydrogen production.</title>
        <authorList>
            <person name="Sieber J.R."/>
            <person name="Sims D.R."/>
            <person name="Han C."/>
            <person name="Kim E."/>
            <person name="Lykidis A."/>
            <person name="Lapidus A.L."/>
            <person name="McDonnald E."/>
            <person name="Rohlin L."/>
            <person name="Culley D.E."/>
            <person name="Gunsalus R."/>
            <person name="McInerney M.J."/>
        </authorList>
    </citation>
    <scope>NUCLEOTIDE SEQUENCE [LARGE SCALE GENOMIC DNA]</scope>
    <source>
        <strain>DSM 2245B / Goettingen</strain>
    </source>
</reference>
<evidence type="ECO:0000255" key="1">
    <source>
        <dbReference type="HAMAP-Rule" id="MF_00003"/>
    </source>
</evidence>
<feature type="chain" id="PRO_0000321264" description="Ribosome-binding factor A">
    <location>
        <begin position="1"/>
        <end position="122"/>
    </location>
</feature>
<gene>
    <name evidence="1" type="primary">rbfA</name>
    <name type="ordered locus">Swol_0901</name>
</gene>
<organism>
    <name type="scientific">Syntrophomonas wolfei subsp. wolfei (strain DSM 2245B / Goettingen)</name>
    <dbReference type="NCBI Taxonomy" id="335541"/>
    <lineage>
        <taxon>Bacteria</taxon>
        <taxon>Bacillati</taxon>
        <taxon>Bacillota</taxon>
        <taxon>Clostridia</taxon>
        <taxon>Eubacteriales</taxon>
        <taxon>Syntrophomonadaceae</taxon>
        <taxon>Syntrophomonas</taxon>
    </lineage>
</organism>
<protein>
    <recommendedName>
        <fullName evidence="1">Ribosome-binding factor A</fullName>
    </recommendedName>
</protein>
<proteinExistence type="inferred from homology"/>
<sequence length="122" mass="14229">MSKRRQERMSVEIMRVLSQIIQEEIKDPRIEFKNLSITRIDLSNDYSHARVNISILGDEIQREEAMKALQKAKGYIRSALAQQLKVRHAPELEFRLDRSIEHGIRISSLLEEIKEEAKGSNE</sequence>
<keyword id="KW-0963">Cytoplasm</keyword>
<keyword id="KW-1185">Reference proteome</keyword>
<keyword id="KW-0690">Ribosome biogenesis</keyword>
<comment type="function">
    <text evidence="1">One of several proteins that assist in the late maturation steps of the functional core of the 30S ribosomal subunit. Associates with free 30S ribosomal subunits (but not with 30S subunits that are part of 70S ribosomes or polysomes). Required for efficient processing of 16S rRNA. May interact with the 5'-terminal helix region of 16S rRNA.</text>
</comment>
<comment type="subunit">
    <text evidence="1">Monomer. Binds 30S ribosomal subunits, but not 50S ribosomal subunits or 70S ribosomes.</text>
</comment>
<comment type="subcellular location">
    <subcellularLocation>
        <location evidence="1">Cytoplasm</location>
    </subcellularLocation>
</comment>
<comment type="similarity">
    <text evidence="1">Belongs to the RbfA family.</text>
</comment>
<name>RBFA_SYNWW</name>
<dbReference type="EMBL" id="CP000448">
    <property type="protein sequence ID" value="ABI68217.1"/>
    <property type="molecule type" value="Genomic_DNA"/>
</dbReference>
<dbReference type="RefSeq" id="WP_011640322.1">
    <property type="nucleotide sequence ID" value="NC_008346.1"/>
</dbReference>
<dbReference type="SMR" id="Q0AYI7"/>
<dbReference type="STRING" id="335541.Swol_0901"/>
<dbReference type="KEGG" id="swo:Swol_0901"/>
<dbReference type="eggNOG" id="COG0858">
    <property type="taxonomic scope" value="Bacteria"/>
</dbReference>
<dbReference type="HOGENOM" id="CLU_089475_6_3_9"/>
<dbReference type="OrthoDB" id="307788at2"/>
<dbReference type="Proteomes" id="UP000001968">
    <property type="component" value="Chromosome"/>
</dbReference>
<dbReference type="GO" id="GO:0005829">
    <property type="term" value="C:cytosol"/>
    <property type="evidence" value="ECO:0007669"/>
    <property type="project" value="TreeGrafter"/>
</dbReference>
<dbReference type="GO" id="GO:0043024">
    <property type="term" value="F:ribosomal small subunit binding"/>
    <property type="evidence" value="ECO:0007669"/>
    <property type="project" value="TreeGrafter"/>
</dbReference>
<dbReference type="GO" id="GO:0030490">
    <property type="term" value="P:maturation of SSU-rRNA"/>
    <property type="evidence" value="ECO:0007669"/>
    <property type="project" value="UniProtKB-UniRule"/>
</dbReference>
<dbReference type="Gene3D" id="3.30.300.20">
    <property type="match status" value="1"/>
</dbReference>
<dbReference type="HAMAP" id="MF_00003">
    <property type="entry name" value="RbfA"/>
    <property type="match status" value="1"/>
</dbReference>
<dbReference type="InterPro" id="IPR015946">
    <property type="entry name" value="KH_dom-like_a/b"/>
</dbReference>
<dbReference type="InterPro" id="IPR000238">
    <property type="entry name" value="RbfA"/>
</dbReference>
<dbReference type="InterPro" id="IPR023799">
    <property type="entry name" value="RbfA_dom_sf"/>
</dbReference>
<dbReference type="InterPro" id="IPR020053">
    <property type="entry name" value="Ribosome-bd_factorA_CS"/>
</dbReference>
<dbReference type="NCBIfam" id="TIGR00082">
    <property type="entry name" value="rbfA"/>
    <property type="match status" value="1"/>
</dbReference>
<dbReference type="PANTHER" id="PTHR33515">
    <property type="entry name" value="RIBOSOME-BINDING FACTOR A, CHLOROPLASTIC-RELATED"/>
    <property type="match status" value="1"/>
</dbReference>
<dbReference type="PANTHER" id="PTHR33515:SF1">
    <property type="entry name" value="RIBOSOME-BINDING FACTOR A, CHLOROPLASTIC-RELATED"/>
    <property type="match status" value="1"/>
</dbReference>
<dbReference type="Pfam" id="PF02033">
    <property type="entry name" value="RBFA"/>
    <property type="match status" value="1"/>
</dbReference>
<dbReference type="SUPFAM" id="SSF89919">
    <property type="entry name" value="Ribosome-binding factor A, RbfA"/>
    <property type="match status" value="1"/>
</dbReference>
<dbReference type="PROSITE" id="PS01319">
    <property type="entry name" value="RBFA"/>
    <property type="match status" value="1"/>
</dbReference>